<proteinExistence type="evidence at protein level"/>
<accession>O65572</accession>
<accession>Q8GRI2</accession>
<accession>Q9LY63</accession>
<gene>
    <name type="primary">CCD1</name>
    <name type="synonym">NC1</name>
    <name type="synonym">NCED1</name>
    <name type="ordered locus">At3g63520</name>
    <name type="ORF">MAA21_150</name>
</gene>
<reference key="1">
    <citation type="journal article" date="1998" name="J. Exp. Bot.">
        <title>Cloning of a wilt-responsive cDNA from an Arabidopsis thaliana suspension culture cDNA library that encodes a putative 9-cis-epoxy-carotenoid dioxygenase.</title>
        <authorList>
            <person name="Neill S.J."/>
            <person name="Burnett E.C."/>
            <person name="Desikan R."/>
            <person name="Hancock J.T."/>
        </authorList>
    </citation>
    <scope>NUCLEOTIDE SEQUENCE [MRNA]</scope>
    <scope>INDUCTION BY DROUGHT STRESS</scope>
    <source>
        <strain>cv. Landsberg erecta</strain>
    </source>
</reference>
<reference key="2">
    <citation type="journal article" date="2001" name="J. Biol. Chem.">
        <title>Characterization of a novel carotenoid cleavage dioxygenase from plants.</title>
        <authorList>
            <person name="Schwartz S.H."/>
            <person name="Qin X."/>
            <person name="Zeevaart J.A."/>
        </authorList>
    </citation>
    <scope>NUCLEOTIDE SEQUENCE [MRNA]</scope>
    <scope>FUNCTION</scope>
    <scope>CATALYTIC ACTIVITY</scope>
    <scope>SUBUNIT</scope>
</reference>
<reference key="3">
    <citation type="journal article" date="2000" name="Nature">
        <title>Sequence and analysis of chromosome 3 of the plant Arabidopsis thaliana.</title>
        <authorList>
            <person name="Salanoubat M."/>
            <person name="Lemcke K."/>
            <person name="Rieger M."/>
            <person name="Ansorge W."/>
            <person name="Unseld M."/>
            <person name="Fartmann B."/>
            <person name="Valle G."/>
            <person name="Bloecker H."/>
            <person name="Perez-Alonso M."/>
            <person name="Obermaier B."/>
            <person name="Delseny M."/>
            <person name="Boutry M."/>
            <person name="Grivell L.A."/>
            <person name="Mache R."/>
            <person name="Puigdomenech P."/>
            <person name="De Simone V."/>
            <person name="Choisne N."/>
            <person name="Artiguenave F."/>
            <person name="Robert C."/>
            <person name="Brottier P."/>
            <person name="Wincker P."/>
            <person name="Cattolico L."/>
            <person name="Weissenbach J."/>
            <person name="Saurin W."/>
            <person name="Quetier F."/>
            <person name="Schaefer M."/>
            <person name="Mueller-Auer S."/>
            <person name="Gabel C."/>
            <person name="Fuchs M."/>
            <person name="Benes V."/>
            <person name="Wurmbach E."/>
            <person name="Drzonek H."/>
            <person name="Erfle H."/>
            <person name="Jordan N."/>
            <person name="Bangert S."/>
            <person name="Wiedelmann R."/>
            <person name="Kranz H."/>
            <person name="Voss H."/>
            <person name="Holland R."/>
            <person name="Brandt P."/>
            <person name="Nyakatura G."/>
            <person name="Vezzi A."/>
            <person name="D'Angelo M."/>
            <person name="Pallavicini A."/>
            <person name="Toppo S."/>
            <person name="Simionati B."/>
            <person name="Conrad A."/>
            <person name="Hornischer K."/>
            <person name="Kauer G."/>
            <person name="Loehnert T.-H."/>
            <person name="Nordsiek G."/>
            <person name="Reichelt J."/>
            <person name="Scharfe M."/>
            <person name="Schoen O."/>
            <person name="Bargues M."/>
            <person name="Terol J."/>
            <person name="Climent J."/>
            <person name="Navarro P."/>
            <person name="Collado C."/>
            <person name="Perez-Perez A."/>
            <person name="Ottenwaelder B."/>
            <person name="Duchemin D."/>
            <person name="Cooke R."/>
            <person name="Laudie M."/>
            <person name="Berger-Llauro C."/>
            <person name="Purnelle B."/>
            <person name="Masuy D."/>
            <person name="de Haan M."/>
            <person name="Maarse A.C."/>
            <person name="Alcaraz J.-P."/>
            <person name="Cottet A."/>
            <person name="Casacuberta E."/>
            <person name="Monfort A."/>
            <person name="Argiriou A."/>
            <person name="Flores M."/>
            <person name="Liguori R."/>
            <person name="Vitale D."/>
            <person name="Mannhaupt G."/>
            <person name="Haase D."/>
            <person name="Schoof H."/>
            <person name="Rudd S."/>
            <person name="Zaccaria P."/>
            <person name="Mewes H.-W."/>
            <person name="Mayer K.F.X."/>
            <person name="Kaul S."/>
            <person name="Town C.D."/>
            <person name="Koo H.L."/>
            <person name="Tallon L.J."/>
            <person name="Jenkins J."/>
            <person name="Rooney T."/>
            <person name="Rizzo M."/>
            <person name="Walts A."/>
            <person name="Utterback T."/>
            <person name="Fujii C.Y."/>
            <person name="Shea T.P."/>
            <person name="Creasy T.H."/>
            <person name="Haas B."/>
            <person name="Maiti R."/>
            <person name="Wu D."/>
            <person name="Peterson J."/>
            <person name="Van Aken S."/>
            <person name="Pai G."/>
            <person name="Militscher J."/>
            <person name="Sellers P."/>
            <person name="Gill J.E."/>
            <person name="Feldblyum T.V."/>
            <person name="Preuss D."/>
            <person name="Lin X."/>
            <person name="Nierman W.C."/>
            <person name="Salzberg S.L."/>
            <person name="White O."/>
            <person name="Venter J.C."/>
            <person name="Fraser C.M."/>
            <person name="Kaneko T."/>
            <person name="Nakamura Y."/>
            <person name="Sato S."/>
            <person name="Kato T."/>
            <person name="Asamizu E."/>
            <person name="Sasamoto S."/>
            <person name="Kimura T."/>
            <person name="Idesawa K."/>
            <person name="Kawashima K."/>
            <person name="Kishida Y."/>
            <person name="Kiyokawa C."/>
            <person name="Kohara M."/>
            <person name="Matsumoto M."/>
            <person name="Matsuno A."/>
            <person name="Muraki A."/>
            <person name="Nakayama S."/>
            <person name="Nakazaki N."/>
            <person name="Shinpo S."/>
            <person name="Takeuchi C."/>
            <person name="Wada T."/>
            <person name="Watanabe A."/>
            <person name="Yamada M."/>
            <person name="Yasuda M."/>
            <person name="Tabata S."/>
        </authorList>
    </citation>
    <scope>NUCLEOTIDE SEQUENCE [LARGE SCALE GENOMIC DNA]</scope>
    <source>
        <strain>cv. Columbia</strain>
    </source>
</reference>
<reference key="4">
    <citation type="journal article" date="2017" name="Plant J.">
        <title>Araport11: a complete reannotation of the Arabidopsis thaliana reference genome.</title>
        <authorList>
            <person name="Cheng C.Y."/>
            <person name="Krishnakumar V."/>
            <person name="Chan A.P."/>
            <person name="Thibaud-Nissen F."/>
            <person name="Schobel S."/>
            <person name="Town C.D."/>
        </authorList>
    </citation>
    <scope>GENOME REANNOTATION</scope>
    <source>
        <strain>cv. Columbia</strain>
    </source>
</reference>
<reference key="5">
    <citation type="journal article" date="2003" name="Science">
        <title>Empirical analysis of transcriptional activity in the Arabidopsis genome.</title>
        <authorList>
            <person name="Yamada K."/>
            <person name="Lim J."/>
            <person name="Dale J.M."/>
            <person name="Chen H."/>
            <person name="Shinn P."/>
            <person name="Palm C.J."/>
            <person name="Southwick A.M."/>
            <person name="Wu H.C."/>
            <person name="Kim C.J."/>
            <person name="Nguyen M."/>
            <person name="Pham P.K."/>
            <person name="Cheuk R.F."/>
            <person name="Karlin-Newmann G."/>
            <person name="Liu S.X."/>
            <person name="Lam B."/>
            <person name="Sakano H."/>
            <person name="Wu T."/>
            <person name="Yu G."/>
            <person name="Miranda M."/>
            <person name="Quach H.L."/>
            <person name="Tripp M."/>
            <person name="Chang C.H."/>
            <person name="Lee J.M."/>
            <person name="Toriumi M.J."/>
            <person name="Chan M.M."/>
            <person name="Tang C.C."/>
            <person name="Onodera C.S."/>
            <person name="Deng J.M."/>
            <person name="Akiyama K."/>
            <person name="Ansari Y."/>
            <person name="Arakawa T."/>
            <person name="Banh J."/>
            <person name="Banno F."/>
            <person name="Bowser L."/>
            <person name="Brooks S.Y."/>
            <person name="Carninci P."/>
            <person name="Chao Q."/>
            <person name="Choy N."/>
            <person name="Enju A."/>
            <person name="Goldsmith A.D."/>
            <person name="Gurjal M."/>
            <person name="Hansen N.F."/>
            <person name="Hayashizaki Y."/>
            <person name="Johnson-Hopson C."/>
            <person name="Hsuan V.W."/>
            <person name="Iida K."/>
            <person name="Karnes M."/>
            <person name="Khan S."/>
            <person name="Koesema E."/>
            <person name="Ishida J."/>
            <person name="Jiang P.X."/>
            <person name="Jones T."/>
            <person name="Kawai J."/>
            <person name="Kamiya A."/>
            <person name="Meyers C."/>
            <person name="Nakajima M."/>
            <person name="Narusaka M."/>
            <person name="Seki M."/>
            <person name="Sakurai T."/>
            <person name="Satou M."/>
            <person name="Tamse R."/>
            <person name="Vaysberg M."/>
            <person name="Wallender E.K."/>
            <person name="Wong C."/>
            <person name="Yamamura Y."/>
            <person name="Yuan S."/>
            <person name="Shinozaki K."/>
            <person name="Davis R.W."/>
            <person name="Theologis A."/>
            <person name="Ecker J.R."/>
        </authorList>
    </citation>
    <scope>NUCLEOTIDE SEQUENCE [LARGE SCALE MRNA] OF 32-538</scope>
    <source>
        <strain>cv. Columbia</strain>
    </source>
</reference>
<reference key="6">
    <citation type="journal article" date="2003" name="Plant J.">
        <title>Molecular characterization of the Arabidopsis 9-cis epoxycarotenoid dioxygenase gene family.</title>
        <authorList>
            <person name="Tan B.-C."/>
            <person name="Joseph L.M."/>
            <person name="Deng W.-T."/>
            <person name="Liu L."/>
            <person name="Li Q.-B."/>
            <person name="Cline K."/>
            <person name="McCarty D.R."/>
        </authorList>
    </citation>
    <scope>SUBCELLULAR LOCATION</scope>
</reference>
<reference key="7">
    <citation type="journal article" date="2006" name="J. Biol. Chem.">
        <title>The carotenase AtCCD1 from Arabidopsis thaliana is a dioxygenase.</title>
        <authorList>
            <person name="Schmidt H."/>
            <person name="Kurtzer R."/>
            <person name="Eisenreich W."/>
            <person name="Schwab W."/>
        </authorList>
    </citation>
    <scope>REACTION MECHANISM</scope>
</reference>
<reference key="8">
    <citation type="journal article" date="2006" name="Plant J.">
        <title>Characterization of three members of the Arabidopsis carotenoid cleavage dioxygenase family demonstrates the divergent roles of this multifunctional enzyme family.</title>
        <authorList>
            <person name="Auldridge M.E."/>
            <person name="Block A."/>
            <person name="Vogel J.T."/>
            <person name="Dabney-Smith C."/>
            <person name="Mila I."/>
            <person name="Bouzayen M."/>
            <person name="Magallanes-Lundback M."/>
            <person name="DellaPenna D."/>
            <person name="McCarty D.R."/>
            <person name="Klee H.J."/>
        </authorList>
    </citation>
    <scope>FUNCTION</scope>
    <scope>DISRUPTION PHENOTYPE</scope>
    <scope>SUBCELLULAR LOCATION</scope>
    <scope>TISSUE SPECIFICITY</scope>
</reference>
<name>CCD1_ARATH</name>
<sequence>MAEKLSDGSSIISVHPRPSKGFSSKLLDLLERLVVKLMHDASLPLHYLSGNFAPIRDETPPVKDLPVHGFLPECLNGEFVRVGPNPKFDAVAGYHWFDGDGMIHGVRIKDGKATYVSRYVKTSRLKQEEFFGAAKFMKIGDLKGFFGLLMVNVQQLRTKLKILDNTYGNGTANTALVYHHGKLLALQEADKPYVIKVLEDGDLQTLGIIDYDKRLTHSFTAHPKVDPVTGEMFTFGYSHTPPYLTYRVISKDGIMHDPVPITISEPIMMHDFAITETYAIFMDLPMHFRPKEMVKEKKMIYSFDPTKKARFGVLPRYAKDELMIRWFELPNCFIFHNANAWEEEDEVVLITCRLENPDLDMVSGKVKEKLENFGNELYEMRFNMKTGSASQKKLSASAVDFPRINECYTGKKQRYVYGTILDSIAKVTGIIKFDLHAEAETGKRMLEVGGNIKGIYDLGEGRYGSEAIYVPRETAEEDDGYLIFFVHDENTGKSCVTVIDAKTMSAEPVAVVELPHRVPYGFHALFVTEEQLQEQTLI</sequence>
<evidence type="ECO:0000250" key="1"/>
<evidence type="ECO:0000269" key="2">
    <source>
    </source>
</evidence>
<evidence type="ECO:0000269" key="3">
    <source>
    </source>
</evidence>
<evidence type="ECO:0000269" key="4">
    <source>
    </source>
</evidence>
<evidence type="ECO:0000269" key="5">
    <source ref="1"/>
</evidence>
<evidence type="ECO:0000305" key="6"/>
<evidence type="ECO:0000305" key="7">
    <source>
    </source>
</evidence>
<organism>
    <name type="scientific">Arabidopsis thaliana</name>
    <name type="common">Mouse-ear cress</name>
    <dbReference type="NCBI Taxonomy" id="3702"/>
    <lineage>
        <taxon>Eukaryota</taxon>
        <taxon>Viridiplantae</taxon>
        <taxon>Streptophyta</taxon>
        <taxon>Embryophyta</taxon>
        <taxon>Tracheophyta</taxon>
        <taxon>Spermatophyta</taxon>
        <taxon>Magnoliopsida</taxon>
        <taxon>eudicotyledons</taxon>
        <taxon>Gunneridae</taxon>
        <taxon>Pentapetalae</taxon>
        <taxon>rosids</taxon>
        <taxon>malvids</taxon>
        <taxon>Brassicales</taxon>
        <taxon>Brassicaceae</taxon>
        <taxon>Camelineae</taxon>
        <taxon>Arabidopsis</taxon>
    </lineage>
</organism>
<feature type="chain" id="PRO_0000285987" description="Carotenoid 9,10(9',10')-cleavage dioxygenase 1">
    <location>
        <begin position="1"/>
        <end position="538"/>
    </location>
</feature>
<feature type="binding site" evidence="1">
    <location>
        <position position="222"/>
    </location>
    <ligand>
        <name>Fe cation</name>
        <dbReference type="ChEBI" id="CHEBI:24875"/>
        <note>catalytic</note>
    </ligand>
</feature>
<feature type="binding site" evidence="1">
    <location>
        <position position="270"/>
    </location>
    <ligand>
        <name>Fe cation</name>
        <dbReference type="ChEBI" id="CHEBI:24875"/>
        <note>catalytic</note>
    </ligand>
</feature>
<feature type="binding site" evidence="1">
    <location>
        <position position="336"/>
    </location>
    <ligand>
        <name>Fe cation</name>
        <dbReference type="ChEBI" id="CHEBI:24875"/>
        <note>catalytic</note>
    </ligand>
</feature>
<feature type="binding site" evidence="1">
    <location>
        <position position="523"/>
    </location>
    <ligand>
        <name>Fe cation</name>
        <dbReference type="ChEBI" id="CHEBI:24875"/>
        <note>catalytic</note>
    </ligand>
</feature>
<feature type="sequence conflict" description="In Ref. 1; CAA06712 and 2; no nucleotide entry." evidence="6" ref="1 2">
    <original>S</original>
    <variation>I</variation>
    <location>
        <position position="10"/>
    </location>
</feature>
<feature type="sequence conflict" description="In Ref. 1; CAA06712 and 2; no nucleotide entry." evidence="6" ref="1 2">
    <original>V</original>
    <variation>I</variation>
    <location>
        <position position="153"/>
    </location>
</feature>
<protein>
    <recommendedName>
        <fullName>Carotenoid 9,10(9',10')-cleavage dioxygenase 1</fullName>
        <ecNumber>1.14.99.n4</ecNumber>
    </recommendedName>
    <alternativeName>
        <fullName>AtCCD1</fullName>
    </alternativeName>
    <alternativeName>
        <fullName>Neoxanthin cleavage enzyme NC1</fullName>
        <shortName>AtNCED1</shortName>
    </alternativeName>
</protein>
<keyword id="KW-0963">Cytoplasm</keyword>
<keyword id="KW-0223">Dioxygenase</keyword>
<keyword id="KW-0408">Iron</keyword>
<keyword id="KW-0479">Metal-binding</keyword>
<keyword id="KW-0560">Oxidoreductase</keyword>
<keyword id="KW-1185">Reference proteome</keyword>
<keyword id="KW-0346">Stress response</keyword>
<comment type="function">
    <text evidence="2 4">Cleaves a variety of carotenoids symmetrically at both the 9-10 and 9'-10' double bonds. Active on beta,beta-carotene, lutein, zeaxanthin, all-trans-violaxanthin, 9-cis-violaxanthin and 9'-cis-neoxanthin. With most substrates, the carotenoid is symmetrically cleaved. Probably not involved in abscisic acid biosynthesis.</text>
</comment>
<comment type="catalytic activity">
    <reaction evidence="2">
        <text>all-trans-zeaxanthin + 2 O2 = 4,9-dimethyldodeca-2,4,6,8,10-pentaenedial + 2 (3R)-hydroxy-beta-ionone</text>
        <dbReference type="Rhea" id="RHEA:26393"/>
        <dbReference type="ChEBI" id="CHEBI:15379"/>
        <dbReference type="ChEBI" id="CHEBI:27547"/>
        <dbReference type="ChEBI" id="CHEBI:53171"/>
        <dbReference type="ChEBI" id="CHEBI:53173"/>
        <dbReference type="EC" id="1.14.99.n4"/>
    </reaction>
</comment>
<comment type="cofactor">
    <cofactor evidence="1">
        <name>Fe(2+)</name>
        <dbReference type="ChEBI" id="CHEBI:29033"/>
    </cofactor>
    <text evidence="1">Binds 1 Fe(2+) ion per subunit.</text>
</comment>
<comment type="subunit">
    <text evidence="7">Homodimer.</text>
</comment>
<comment type="subcellular location">
    <subcellularLocation>
        <location evidence="3 4">Cytoplasm</location>
    </subcellularLocation>
    <text>On the exterior surface of the plastids.</text>
</comment>
<comment type="tissue specificity">
    <text evidence="4">High expression in flowers and siliques. Also detected in stems, leaves and roots.</text>
</comment>
<comment type="induction">
    <text evidence="5">By drought stress.</text>
</comment>
<comment type="disruption phenotype">
    <text evidence="4">Plants do not show any phenotype alteration, but leads to higher seed carotenoid content.</text>
</comment>
<comment type="similarity">
    <text evidence="6">Belongs to the carotenoid oxygenase family.</text>
</comment>
<comment type="sequence caution" evidence="6">
    <conflict type="erroneous initiation">
        <sequence resource="EMBL-CDS" id="AAN17413"/>
    </conflict>
    <text>Truncated N-terminus.</text>
</comment>
<dbReference type="EC" id="1.14.99.n4"/>
<dbReference type="EMBL" id="AJ005813">
    <property type="protein sequence ID" value="CAA06712.1"/>
    <property type="molecule type" value="mRNA"/>
</dbReference>
<dbReference type="EMBL" id="AL163818">
    <property type="protein sequence ID" value="CAB87805.1"/>
    <property type="molecule type" value="Genomic_DNA"/>
</dbReference>
<dbReference type="EMBL" id="CP002686">
    <property type="protein sequence ID" value="AEE80498.1"/>
    <property type="molecule type" value="Genomic_DNA"/>
</dbReference>
<dbReference type="EMBL" id="BT000436">
    <property type="protein sequence ID" value="AAN17413.1"/>
    <property type="status" value="ALT_INIT"/>
    <property type="molecule type" value="mRNA"/>
</dbReference>
<dbReference type="EMBL" id="BT002102">
    <property type="protein sequence ID" value="AAN72113.1"/>
    <property type="molecule type" value="mRNA"/>
</dbReference>
<dbReference type="PIR" id="T49193">
    <property type="entry name" value="T49193"/>
</dbReference>
<dbReference type="PIR" id="T51734">
    <property type="entry name" value="T51734"/>
</dbReference>
<dbReference type="RefSeq" id="NP_191911.1">
    <property type="nucleotide sequence ID" value="NM_116217.3"/>
</dbReference>
<dbReference type="SMR" id="O65572"/>
<dbReference type="FunCoup" id="O65572">
    <property type="interactions" value="1008"/>
</dbReference>
<dbReference type="STRING" id="3702.O65572"/>
<dbReference type="iPTMnet" id="O65572"/>
<dbReference type="PaxDb" id="3702-AT3G63520.1"/>
<dbReference type="ProteomicsDB" id="222792"/>
<dbReference type="EnsemblPlants" id="AT3G63520.1">
    <property type="protein sequence ID" value="AT3G63520.1"/>
    <property type="gene ID" value="AT3G63520"/>
</dbReference>
<dbReference type="GeneID" id="825527"/>
<dbReference type="Gramene" id="AT3G63520.1">
    <property type="protein sequence ID" value="AT3G63520.1"/>
    <property type="gene ID" value="AT3G63520"/>
</dbReference>
<dbReference type="KEGG" id="ath:AT3G63520"/>
<dbReference type="Araport" id="AT3G63520"/>
<dbReference type="TAIR" id="AT3G63520">
    <property type="gene designation" value="CCD1"/>
</dbReference>
<dbReference type="eggNOG" id="KOG1285">
    <property type="taxonomic scope" value="Eukaryota"/>
</dbReference>
<dbReference type="HOGENOM" id="CLU_016472_0_0_1"/>
<dbReference type="InParanoid" id="O65572"/>
<dbReference type="OMA" id="TVGWYNG"/>
<dbReference type="PhylomeDB" id="O65572"/>
<dbReference type="BioCyc" id="MetaCyc:AT3G63520-MONOMER"/>
<dbReference type="PRO" id="PR:O65572"/>
<dbReference type="Proteomes" id="UP000006548">
    <property type="component" value="Chromosome 3"/>
</dbReference>
<dbReference type="ExpressionAtlas" id="O65572">
    <property type="expression patterns" value="baseline and differential"/>
</dbReference>
<dbReference type="GO" id="GO:0005737">
    <property type="term" value="C:cytoplasm"/>
    <property type="evidence" value="ECO:0000314"/>
    <property type="project" value="TAIR"/>
</dbReference>
<dbReference type="GO" id="GO:0005829">
    <property type="term" value="C:cytosol"/>
    <property type="evidence" value="ECO:0007005"/>
    <property type="project" value="TAIR"/>
</dbReference>
<dbReference type="GO" id="GO:0005794">
    <property type="term" value="C:Golgi apparatus"/>
    <property type="evidence" value="ECO:0007005"/>
    <property type="project" value="TAIR"/>
</dbReference>
<dbReference type="GO" id="GO:0000325">
    <property type="term" value="C:plant-type vacuole"/>
    <property type="evidence" value="ECO:0007005"/>
    <property type="project" value="TAIR"/>
</dbReference>
<dbReference type="GO" id="GO:0005886">
    <property type="term" value="C:plasma membrane"/>
    <property type="evidence" value="ECO:0007005"/>
    <property type="project" value="TAIR"/>
</dbReference>
<dbReference type="GO" id="GO:0009506">
    <property type="term" value="C:plasmodesma"/>
    <property type="evidence" value="ECO:0007005"/>
    <property type="project" value="TAIR"/>
</dbReference>
<dbReference type="GO" id="GO:0045549">
    <property type="term" value="F:9-cis-epoxycarotenoid dioxygenase activity"/>
    <property type="evidence" value="ECO:0000314"/>
    <property type="project" value="TAIR"/>
</dbReference>
<dbReference type="GO" id="GO:0046872">
    <property type="term" value="F:metal ion binding"/>
    <property type="evidence" value="ECO:0007669"/>
    <property type="project" value="UniProtKB-KW"/>
</dbReference>
<dbReference type="GO" id="GO:0016121">
    <property type="term" value="P:carotene catabolic process"/>
    <property type="evidence" value="ECO:0000315"/>
    <property type="project" value="TAIR"/>
</dbReference>
<dbReference type="GO" id="GO:0016118">
    <property type="term" value="P:carotenoid catabolic process"/>
    <property type="evidence" value="ECO:0000314"/>
    <property type="project" value="TAIR"/>
</dbReference>
<dbReference type="GO" id="GO:0016124">
    <property type="term" value="P:xanthophyll catabolic process"/>
    <property type="evidence" value="ECO:0000315"/>
    <property type="project" value="TAIR"/>
</dbReference>
<dbReference type="InterPro" id="IPR004294">
    <property type="entry name" value="Carotenoid_Oase"/>
</dbReference>
<dbReference type="PANTHER" id="PTHR10543">
    <property type="entry name" value="BETA-CAROTENE DIOXYGENASE"/>
    <property type="match status" value="1"/>
</dbReference>
<dbReference type="PANTHER" id="PTHR10543:SF89">
    <property type="entry name" value="CAROTENOID 9,10(9',10')-CLEAVAGE DIOXYGENASE 1"/>
    <property type="match status" value="1"/>
</dbReference>
<dbReference type="Pfam" id="PF03055">
    <property type="entry name" value="RPE65"/>
    <property type="match status" value="1"/>
</dbReference>